<keyword id="KW-0002">3D-structure</keyword>
<keyword id="KW-0225">Disease variant</keyword>
<keyword id="KW-0887">Epilepsy</keyword>
<keyword id="KW-0349">Heme</keyword>
<keyword id="KW-0991">Intellectual disability</keyword>
<keyword id="KW-0408">Iron</keyword>
<keyword id="KW-0479">Metal-binding</keyword>
<keyword id="KW-0496">Mitochondrion</keyword>
<keyword id="KW-0500">Molybdenum</keyword>
<keyword id="KW-0560">Oxidoreductase</keyword>
<keyword id="KW-0597">Phosphoprotein</keyword>
<keyword id="KW-1267">Proteomics identification</keyword>
<keyword id="KW-1185">Reference proteome</keyword>
<keyword id="KW-0809">Transit peptide</keyword>
<evidence type="ECO:0000250" key="1">
    <source>
        <dbReference type="UniProtKB" id="P07850"/>
    </source>
</evidence>
<evidence type="ECO:0000250" key="2">
    <source>
        <dbReference type="UniProtKB" id="Q07116"/>
    </source>
</evidence>
<evidence type="ECO:0000255" key="3">
    <source>
        <dbReference type="PROSITE-ProRule" id="PRU00279"/>
    </source>
</evidence>
<evidence type="ECO:0000269" key="4">
    <source>
    </source>
</evidence>
<evidence type="ECO:0000269" key="5">
    <source>
    </source>
</evidence>
<evidence type="ECO:0000269" key="6">
    <source>
    </source>
</evidence>
<evidence type="ECO:0000269" key="7">
    <source>
    </source>
</evidence>
<evidence type="ECO:0000269" key="8">
    <source>
    </source>
</evidence>
<evidence type="ECO:0000269" key="9">
    <source>
    </source>
</evidence>
<evidence type="ECO:0000303" key="10">
    <source>
    </source>
</evidence>
<evidence type="ECO:0000305" key="11"/>
<evidence type="ECO:0007744" key="12">
    <source>
    </source>
</evidence>
<evidence type="ECO:0007829" key="13">
    <source>
        <dbReference type="PDB" id="1MJ4"/>
    </source>
</evidence>
<dbReference type="EC" id="1.8.3.1" evidence="2"/>
<dbReference type="EMBL" id="L31573">
    <property type="protein sequence ID" value="AAA74886.1"/>
    <property type="status" value="ALT_INIT"/>
    <property type="molecule type" value="mRNA"/>
</dbReference>
<dbReference type="EMBL" id="BC065193">
    <property type="protein sequence ID" value="AAH65193.2"/>
    <property type="molecule type" value="mRNA"/>
</dbReference>
<dbReference type="EMBL" id="AY056018">
    <property type="protein sequence ID" value="AAL08048.1"/>
    <property type="status" value="ALT_INIT"/>
    <property type="molecule type" value="Genomic_DNA"/>
</dbReference>
<dbReference type="CCDS" id="CCDS8901.2"/>
<dbReference type="PIR" id="S55874">
    <property type="entry name" value="S55874"/>
</dbReference>
<dbReference type="RefSeq" id="NP_000447.2">
    <property type="nucleotide sequence ID" value="NM_000456.3"/>
</dbReference>
<dbReference type="RefSeq" id="NP_001027558.1">
    <property type="nucleotide sequence ID" value="NM_001032386.2"/>
</dbReference>
<dbReference type="RefSeq" id="NP_001027559.1">
    <property type="nucleotide sequence ID" value="NM_001032387.2"/>
</dbReference>
<dbReference type="RefSeq" id="XP_016875396.1">
    <property type="nucleotide sequence ID" value="XM_017019907.1"/>
</dbReference>
<dbReference type="RefSeq" id="XP_016875397.1">
    <property type="nucleotide sequence ID" value="XM_017019908.1"/>
</dbReference>
<dbReference type="PDB" id="1MJ4">
    <property type="method" value="X-ray"/>
    <property type="resolution" value="1.20 A"/>
    <property type="chains" value="A=79-160"/>
</dbReference>
<dbReference type="PDBsum" id="1MJ4"/>
<dbReference type="SMR" id="P51687"/>
<dbReference type="BioGRID" id="112690">
    <property type="interactions" value="97"/>
</dbReference>
<dbReference type="FunCoup" id="P51687">
    <property type="interactions" value="1066"/>
</dbReference>
<dbReference type="IntAct" id="P51687">
    <property type="interactions" value="99"/>
</dbReference>
<dbReference type="STRING" id="9606.ENSP00000377668"/>
<dbReference type="DrugBank" id="DB03983">
    <property type="generic name" value="{[2-Amino-4-oxo-6,7-di(sulfanyl-KappaS)-3,5,5a,8,9a,10-hexahydro-4H-pyrano[3,2-g]pteridin-8-yl]methyl dihydrogenato(2-) phosphate}(dioxo)sulfanylmolybdenum"/>
</dbReference>
<dbReference type="iPTMnet" id="P51687"/>
<dbReference type="PhosphoSitePlus" id="P51687"/>
<dbReference type="SwissPalm" id="P51687"/>
<dbReference type="BioMuta" id="SUOX"/>
<dbReference type="DMDM" id="152031695"/>
<dbReference type="jPOST" id="P51687"/>
<dbReference type="MassIVE" id="P51687"/>
<dbReference type="PaxDb" id="9606-ENSP00000377668"/>
<dbReference type="PeptideAtlas" id="P51687"/>
<dbReference type="ProteomicsDB" id="56372"/>
<dbReference type="Pumba" id="P51687"/>
<dbReference type="Antibodypedia" id="27840">
    <property type="antibodies" value="388 antibodies from 29 providers"/>
</dbReference>
<dbReference type="DNASU" id="6821"/>
<dbReference type="Ensembl" id="ENST00000266971.8">
    <property type="protein sequence ID" value="ENSP00000266971.3"/>
    <property type="gene ID" value="ENSG00000139531.13"/>
</dbReference>
<dbReference type="Ensembl" id="ENST00000356124.8">
    <property type="protein sequence ID" value="ENSP00000348440.4"/>
    <property type="gene ID" value="ENSG00000139531.13"/>
</dbReference>
<dbReference type="Ensembl" id="ENST00000394109.7">
    <property type="protein sequence ID" value="ENSP00000377668.3"/>
    <property type="gene ID" value="ENSG00000139531.13"/>
</dbReference>
<dbReference type="Ensembl" id="ENST00000394115.6">
    <property type="protein sequence ID" value="ENSP00000377674.2"/>
    <property type="gene ID" value="ENSG00000139531.13"/>
</dbReference>
<dbReference type="Ensembl" id="ENST00000548274.5">
    <property type="protein sequence ID" value="ENSP00000450245.1"/>
    <property type="gene ID" value="ENSG00000139531.13"/>
</dbReference>
<dbReference type="Ensembl" id="ENST00000550065.1">
    <property type="protein sequence ID" value="ENSP00000450264.1"/>
    <property type="gene ID" value="ENSG00000139531.13"/>
</dbReference>
<dbReference type="GeneID" id="6821"/>
<dbReference type="KEGG" id="hsa:6821"/>
<dbReference type="MANE-Select" id="ENST00000266971.8">
    <property type="protein sequence ID" value="ENSP00000266971.3"/>
    <property type="RefSeq nucleotide sequence ID" value="NM_001032386.2"/>
    <property type="RefSeq protein sequence ID" value="NP_001027558.1"/>
</dbReference>
<dbReference type="UCSC" id="uc001six.4">
    <property type="organism name" value="human"/>
</dbReference>
<dbReference type="AGR" id="HGNC:11460"/>
<dbReference type="CTD" id="6821"/>
<dbReference type="DisGeNET" id="6821"/>
<dbReference type="GeneCards" id="SUOX"/>
<dbReference type="GeneReviews" id="SUOX"/>
<dbReference type="HGNC" id="HGNC:11460">
    <property type="gene designation" value="SUOX"/>
</dbReference>
<dbReference type="HPA" id="ENSG00000139531">
    <property type="expression patterns" value="Low tissue specificity"/>
</dbReference>
<dbReference type="MalaCards" id="SUOX"/>
<dbReference type="MIM" id="272300">
    <property type="type" value="phenotype"/>
</dbReference>
<dbReference type="MIM" id="606887">
    <property type="type" value="gene"/>
</dbReference>
<dbReference type="neXtProt" id="NX_P51687"/>
<dbReference type="OpenTargets" id="ENSG00000139531"/>
<dbReference type="Orphanet" id="99731">
    <property type="disease" value="Isolated sulfite oxidase deficiency"/>
</dbReference>
<dbReference type="PharmGKB" id="PA36250"/>
<dbReference type="VEuPathDB" id="HostDB:ENSG00000139531"/>
<dbReference type="eggNOG" id="KOG0535">
    <property type="taxonomic scope" value="Eukaryota"/>
</dbReference>
<dbReference type="eggNOG" id="KOG4576">
    <property type="taxonomic scope" value="Eukaryota"/>
</dbReference>
<dbReference type="GeneTree" id="ENSGT00390000003749"/>
<dbReference type="HOGENOM" id="CLU_003827_5_1_1"/>
<dbReference type="InParanoid" id="P51687"/>
<dbReference type="OMA" id="TWHVAEL"/>
<dbReference type="OrthoDB" id="10051395at2759"/>
<dbReference type="PAN-GO" id="P51687">
    <property type="GO annotations" value="5 GO annotations based on evolutionary models"/>
</dbReference>
<dbReference type="PhylomeDB" id="P51687"/>
<dbReference type="TreeFam" id="TF300905"/>
<dbReference type="BioCyc" id="MetaCyc:HS06627-MONOMER"/>
<dbReference type="BRENDA" id="1.8.3.1">
    <property type="organism ID" value="2681"/>
</dbReference>
<dbReference type="PathwayCommons" id="P51687"/>
<dbReference type="Reactome" id="R-HSA-1614517">
    <property type="pathway name" value="Sulfide oxidation to sulfate"/>
</dbReference>
<dbReference type="SABIO-RK" id="P51687"/>
<dbReference type="SignaLink" id="P51687"/>
<dbReference type="UniPathway" id="UPA00096"/>
<dbReference type="BioGRID-ORCS" id="6821">
    <property type="hits" value="18 hits in 1161 CRISPR screens"/>
</dbReference>
<dbReference type="ChiTaRS" id="SUOX">
    <property type="organism name" value="human"/>
</dbReference>
<dbReference type="EvolutionaryTrace" id="P51687"/>
<dbReference type="GeneWiki" id="Sulfite_oxidase"/>
<dbReference type="GenomeRNAi" id="6821"/>
<dbReference type="Pharos" id="P51687">
    <property type="development level" value="Tbio"/>
</dbReference>
<dbReference type="PRO" id="PR:P51687"/>
<dbReference type="Proteomes" id="UP000005640">
    <property type="component" value="Chromosome 12"/>
</dbReference>
<dbReference type="RNAct" id="P51687">
    <property type="molecule type" value="protein"/>
</dbReference>
<dbReference type="Bgee" id="ENSG00000139531">
    <property type="expression patterns" value="Expressed in right lobe of liver and 182 other cell types or tissues"/>
</dbReference>
<dbReference type="ExpressionAtlas" id="P51687">
    <property type="expression patterns" value="baseline and differential"/>
</dbReference>
<dbReference type="GO" id="GO:0005758">
    <property type="term" value="C:mitochondrial intermembrane space"/>
    <property type="evidence" value="ECO:0007669"/>
    <property type="project" value="UniProtKB-SubCell"/>
</dbReference>
<dbReference type="GO" id="GO:0005759">
    <property type="term" value="C:mitochondrial matrix"/>
    <property type="evidence" value="ECO:0000304"/>
    <property type="project" value="Reactome"/>
</dbReference>
<dbReference type="GO" id="GO:0005739">
    <property type="term" value="C:mitochondrion"/>
    <property type="evidence" value="ECO:0006056"/>
    <property type="project" value="FlyBase"/>
</dbReference>
<dbReference type="GO" id="GO:0020037">
    <property type="term" value="F:heme binding"/>
    <property type="evidence" value="ECO:0000318"/>
    <property type="project" value="GO_Central"/>
</dbReference>
<dbReference type="GO" id="GO:0030151">
    <property type="term" value="F:molybdenum ion binding"/>
    <property type="evidence" value="ECO:0007669"/>
    <property type="project" value="InterPro"/>
</dbReference>
<dbReference type="GO" id="GO:0043546">
    <property type="term" value="F:molybdopterin cofactor binding"/>
    <property type="evidence" value="ECO:0000318"/>
    <property type="project" value="GO_Central"/>
</dbReference>
<dbReference type="GO" id="GO:0008482">
    <property type="term" value="F:sulfite oxidase activity"/>
    <property type="evidence" value="ECO:0000318"/>
    <property type="project" value="GO_Central"/>
</dbReference>
<dbReference type="GO" id="GO:0006790">
    <property type="term" value="P:sulfur compound metabolic process"/>
    <property type="evidence" value="ECO:0000318"/>
    <property type="project" value="GO_Central"/>
</dbReference>
<dbReference type="CDD" id="cd02111">
    <property type="entry name" value="eukary_SO_Moco"/>
    <property type="match status" value="1"/>
</dbReference>
<dbReference type="FunFam" id="2.60.40.650:FF:000003">
    <property type="entry name" value="Sulfite oxidase, mitochondrial"/>
    <property type="match status" value="1"/>
</dbReference>
<dbReference type="FunFam" id="3.10.120.10:FF:000007">
    <property type="entry name" value="Sulfite oxidase, mitochondrial"/>
    <property type="match status" value="1"/>
</dbReference>
<dbReference type="FunFam" id="3.90.420.10:FF:000002">
    <property type="entry name" value="sulfite oxidase, mitochondrial"/>
    <property type="match status" value="1"/>
</dbReference>
<dbReference type="Gene3D" id="2.60.40.650">
    <property type="match status" value="1"/>
</dbReference>
<dbReference type="Gene3D" id="3.10.120.10">
    <property type="entry name" value="Cytochrome b5-like heme/steroid binding domain"/>
    <property type="match status" value="1"/>
</dbReference>
<dbReference type="Gene3D" id="3.90.420.10">
    <property type="entry name" value="Oxidoreductase, molybdopterin-binding domain"/>
    <property type="match status" value="1"/>
</dbReference>
<dbReference type="InterPro" id="IPR001199">
    <property type="entry name" value="Cyt_B5-like_heme/steroid-bd"/>
</dbReference>
<dbReference type="InterPro" id="IPR036400">
    <property type="entry name" value="Cyt_B5-like_heme/steroid_sf"/>
</dbReference>
<dbReference type="InterPro" id="IPR018506">
    <property type="entry name" value="Cyt_B5_heme-BS"/>
</dbReference>
<dbReference type="InterPro" id="IPR014756">
    <property type="entry name" value="Ig_E-set"/>
</dbReference>
<dbReference type="InterPro" id="IPR005066">
    <property type="entry name" value="MoCF_OxRdtse_dimer"/>
</dbReference>
<dbReference type="InterPro" id="IPR008335">
    <property type="entry name" value="Mopterin_OxRdtase_euk"/>
</dbReference>
<dbReference type="InterPro" id="IPR000572">
    <property type="entry name" value="OxRdtase_Mopterin-bd_dom"/>
</dbReference>
<dbReference type="InterPro" id="IPR036374">
    <property type="entry name" value="OxRdtase_Mopterin-bd_sf"/>
</dbReference>
<dbReference type="InterPro" id="IPR022407">
    <property type="entry name" value="OxRdtase_Mopterin_BS"/>
</dbReference>
<dbReference type="PANTHER" id="PTHR19372:SF7">
    <property type="entry name" value="SULFITE OXIDASE, MITOCHONDRIAL"/>
    <property type="match status" value="1"/>
</dbReference>
<dbReference type="PANTHER" id="PTHR19372">
    <property type="entry name" value="SULFITE REDUCTASE"/>
    <property type="match status" value="1"/>
</dbReference>
<dbReference type="Pfam" id="PF00173">
    <property type="entry name" value="Cyt-b5"/>
    <property type="match status" value="1"/>
</dbReference>
<dbReference type="Pfam" id="PF03404">
    <property type="entry name" value="Mo-co_dimer"/>
    <property type="match status" value="1"/>
</dbReference>
<dbReference type="Pfam" id="PF00174">
    <property type="entry name" value="Oxidored_molyb"/>
    <property type="match status" value="1"/>
</dbReference>
<dbReference type="PRINTS" id="PR00363">
    <property type="entry name" value="CYTOCHROMEB5"/>
</dbReference>
<dbReference type="PRINTS" id="PR00407">
    <property type="entry name" value="EUMOPTERIN"/>
</dbReference>
<dbReference type="SMART" id="SM01117">
    <property type="entry name" value="Cyt-b5"/>
    <property type="match status" value="1"/>
</dbReference>
<dbReference type="SUPFAM" id="SSF55856">
    <property type="entry name" value="Cytochrome b5-like heme/steroid binding domain"/>
    <property type="match status" value="1"/>
</dbReference>
<dbReference type="SUPFAM" id="SSF81296">
    <property type="entry name" value="E set domains"/>
    <property type="match status" value="1"/>
</dbReference>
<dbReference type="SUPFAM" id="SSF56524">
    <property type="entry name" value="Oxidoreductase molybdopterin-binding domain"/>
    <property type="match status" value="1"/>
</dbReference>
<dbReference type="PROSITE" id="PS00191">
    <property type="entry name" value="CYTOCHROME_B5_1"/>
    <property type="match status" value="1"/>
</dbReference>
<dbReference type="PROSITE" id="PS50255">
    <property type="entry name" value="CYTOCHROME_B5_2"/>
    <property type="match status" value="1"/>
</dbReference>
<dbReference type="PROSITE" id="PS00559">
    <property type="entry name" value="MOLYBDOPTERIN_EUK"/>
    <property type="match status" value="1"/>
</dbReference>
<comment type="function">
    <text evidence="2">Catalyzes the oxidation of sulfite to sulfate, the terminal reaction in the oxidative degradation of sulfur-containing amino acids.</text>
</comment>
<comment type="catalytic activity">
    <reaction evidence="2">
        <text>sulfite + O2 + H2O = sulfate + H2O2</text>
        <dbReference type="Rhea" id="RHEA:24600"/>
        <dbReference type="ChEBI" id="CHEBI:15377"/>
        <dbReference type="ChEBI" id="CHEBI:15379"/>
        <dbReference type="ChEBI" id="CHEBI:16189"/>
        <dbReference type="ChEBI" id="CHEBI:16240"/>
        <dbReference type="ChEBI" id="CHEBI:17359"/>
        <dbReference type="EC" id="1.8.3.1"/>
    </reaction>
    <physiologicalReaction direction="left-to-right" evidence="2">
        <dbReference type="Rhea" id="RHEA:24601"/>
    </physiologicalReaction>
</comment>
<comment type="cofactor">
    <cofactor evidence="7">
        <name>heme b</name>
        <dbReference type="ChEBI" id="CHEBI:60344"/>
    </cofactor>
    <text evidence="7">Binds 1 heme b (iron(II)-protoporphyrin IX) group non-covalently per subunit.</text>
</comment>
<comment type="cofactor">
    <cofactor evidence="1">
        <name>Mo-molybdopterin</name>
        <dbReference type="ChEBI" id="CHEBI:71302"/>
    </cofactor>
    <text evidence="1">Binds 1 Mo-molybdopterin (Mo-MPT) cofactor per subunit.</text>
</comment>
<comment type="pathway">
    <text evidence="2">Energy metabolism; sulfur metabolism.</text>
</comment>
<comment type="subunit">
    <text evidence="7">Homodimer.</text>
</comment>
<comment type="interaction">
    <interactant intactId="EBI-3921347">
        <id>P51687</id>
    </interactant>
    <interactant intactId="EBI-17721098">
        <id>Q8WXI4-2</id>
        <label>ACOT11</label>
    </interactant>
    <organismsDiffer>false</organismsDiffer>
    <experiments>3</experiments>
</comment>
<comment type="interaction">
    <interactant intactId="EBI-3921347">
        <id>P51687</id>
    </interactant>
    <interactant intactId="EBI-2949658">
        <id>O95429</id>
        <label>BAG4</label>
    </interactant>
    <organismsDiffer>false</organismsDiffer>
    <experiments>3</experiments>
</comment>
<comment type="interaction">
    <interactant intactId="EBI-3921347">
        <id>P51687</id>
    </interactant>
    <interactant intactId="EBI-3844053">
        <id>Q13901</id>
        <label>C1D</label>
    </interactant>
    <organismsDiffer>false</organismsDiffer>
    <experiments>3</experiments>
</comment>
<comment type="interaction">
    <interactant intactId="EBI-3921347">
        <id>P51687</id>
    </interactant>
    <interactant intactId="EBI-1383687">
        <id>Q9UQM7</id>
        <label>CAMK2A</label>
    </interactant>
    <organismsDiffer>false</organismsDiffer>
    <experiments>3</experiments>
</comment>
<comment type="interaction">
    <interactant intactId="EBI-3921347">
        <id>P51687</id>
    </interactant>
    <interactant intactId="EBI-10261970">
        <id>Q8IW40</id>
        <label>CCDC103</label>
    </interactant>
    <organismsDiffer>false</organismsDiffer>
    <experiments>3</experiments>
</comment>
<comment type="interaction">
    <interactant intactId="EBI-3921347">
        <id>P51687</id>
    </interactant>
    <interactant intactId="EBI-1773949">
        <id>Q9BXL8</id>
        <label>CDCA4</label>
    </interactant>
    <organismsDiffer>false</organismsDiffer>
    <experiments>3</experiments>
</comment>
<comment type="interaction">
    <interactant intactId="EBI-3921347">
        <id>P51687</id>
    </interactant>
    <interactant intactId="EBI-742887">
        <id>Q8TAP6</id>
        <label>CEP76</label>
    </interactant>
    <organismsDiffer>false</organismsDiffer>
    <experiments>3</experiments>
</comment>
<comment type="interaction">
    <interactant intactId="EBI-3921347">
        <id>P51687</id>
    </interactant>
    <interactant intactId="EBI-6269632">
        <id>Q96BR5</id>
        <label>COA7</label>
    </interactant>
    <organismsDiffer>false</organismsDiffer>
    <experiments>3</experiments>
</comment>
<comment type="interaction">
    <interactant intactId="EBI-3921347">
        <id>P51687</id>
    </interactant>
    <interactant intactId="EBI-2510102">
        <id>Q99627</id>
        <label>COPS8</label>
    </interactant>
    <organismsDiffer>false</organismsDiffer>
    <experiments>3</experiments>
</comment>
<comment type="interaction">
    <interactant intactId="EBI-3921347">
        <id>P51687</id>
    </interactant>
    <interactant intactId="EBI-748171">
        <id>O43186</id>
        <label>CRX</label>
    </interactant>
    <organismsDiffer>false</organismsDiffer>
    <experiments>3</experiments>
</comment>
<comment type="interaction">
    <interactant intactId="EBI-3921347">
        <id>P51687</id>
    </interactant>
    <interactant intactId="EBI-1188472">
        <id>P78358</id>
        <label>CTAG1B</label>
    </interactant>
    <organismsDiffer>false</organismsDiffer>
    <experiments>3</experiments>
</comment>
<comment type="interaction">
    <interactant intactId="EBI-3921347">
        <id>P51687</id>
    </interactant>
    <interactant intactId="EBI-12102608">
        <id>Q6BCY4-2</id>
        <label>CYB5R2</label>
    </interactant>
    <organismsDiffer>false</organismsDiffer>
    <experiments>3</experiments>
</comment>
<comment type="interaction">
    <interactant intactId="EBI-3921347">
        <id>P51687</id>
    </interactant>
    <interactant intactId="EBI-742054">
        <id>Q96D03</id>
        <label>DDIT4L</label>
    </interactant>
    <organismsDiffer>false</organismsDiffer>
    <experiments>3</experiments>
</comment>
<comment type="interaction">
    <interactant intactId="EBI-3921347">
        <id>P51687</id>
    </interactant>
    <interactant intactId="EBI-399105">
        <id>Q9NPF5</id>
        <label>DMAP1</label>
    </interactant>
    <organismsDiffer>false</organismsDiffer>
    <experiments>3</experiments>
</comment>
<comment type="interaction">
    <interactant intactId="EBI-3921347">
        <id>P51687</id>
    </interactant>
    <interactant intactId="EBI-7357329">
        <id>Q9H596</id>
        <label>DUSP21</label>
    </interactant>
    <organismsDiffer>false</organismsDiffer>
    <experiments>3</experiments>
</comment>
<comment type="interaction">
    <interactant intactId="EBI-3921347">
        <id>P51687</id>
    </interactant>
    <interactant intactId="EBI-711990">
        <id>O00303</id>
        <label>EIF3F</label>
    </interactant>
    <organismsDiffer>false</organismsDiffer>
    <experiments>3</experiments>
</comment>
<comment type="interaction">
    <interactant intactId="EBI-3921347">
        <id>P51687</id>
    </interactant>
    <interactant intactId="EBI-18398448">
        <id>A6NGS2</id>
        <label>ERICH4</label>
    </interactant>
    <organismsDiffer>false</organismsDiffer>
    <experiments>3</experiments>
</comment>
<comment type="interaction">
    <interactant intactId="EBI-3921347">
        <id>P51687</id>
    </interactant>
    <interactant intactId="EBI-12807776">
        <id>O00167-2</id>
        <label>EYA2</label>
    </interactant>
    <organismsDiffer>false</organismsDiffer>
    <experiments>3</experiments>
</comment>
<comment type="interaction">
    <interactant intactId="EBI-3921347">
        <id>P51687</id>
    </interactant>
    <interactant intactId="EBI-19153639">
        <id>Q9NTX9</id>
        <label>FAM217B</label>
    </interactant>
    <organismsDiffer>false</organismsDiffer>
    <experiments>3</experiments>
</comment>
<comment type="interaction">
    <interactant intactId="EBI-3921347">
        <id>P51687</id>
    </interactant>
    <interactant intactId="EBI-81610">
        <id>O15287</id>
        <label>FANCG</label>
    </interactant>
    <organismsDiffer>false</organismsDiffer>
    <experiments>3</experiments>
</comment>
<comment type="interaction">
    <interactant intactId="EBI-3921347">
        <id>P51687</id>
    </interactant>
    <interactant intactId="EBI-11976595">
        <id>Q8IXW7</id>
        <label>FMR1</label>
    </interactant>
    <organismsDiffer>false</organismsDiffer>
    <experiments>3</experiments>
</comment>
<comment type="interaction">
    <interactant intactId="EBI-3921347">
        <id>P51687</id>
    </interactant>
    <interactant intactId="EBI-10242151">
        <id>Q53EP0-3</id>
        <label>FNDC3B</label>
    </interactant>
    <organismsDiffer>false</organismsDiffer>
    <experiments>3</experiments>
</comment>
<comment type="interaction">
    <interactant intactId="EBI-3921347">
        <id>P51687</id>
    </interactant>
    <interactant intactId="EBI-5916454">
        <id>A6NEM1</id>
        <label>GOLGA6L9</label>
    </interactant>
    <organismsDiffer>false</organismsDiffer>
    <experiments>3</experiments>
</comment>
<comment type="interaction">
    <interactant intactId="EBI-3921347">
        <id>P51687</id>
    </interactant>
    <interactant intactId="EBI-740641">
        <id>Q9NP66</id>
        <label>HMG20A</label>
    </interactant>
    <organismsDiffer>false</organismsDiffer>
    <experiments>3</experiments>
</comment>
<comment type="interaction">
    <interactant intactId="EBI-3921347">
        <id>P51687</id>
    </interactant>
    <interactant intactId="EBI-6509505">
        <id>Q0VD86</id>
        <label>INCA1</label>
    </interactant>
    <organismsDiffer>false</organismsDiffer>
    <experiments>5</experiments>
</comment>
<comment type="interaction">
    <interactant intactId="EBI-3921347">
        <id>P51687</id>
    </interactant>
    <interactant intactId="EBI-488533">
        <id>Q8WYH8</id>
        <label>ING5</label>
    </interactant>
    <organismsDiffer>false</organismsDiffer>
    <experiments>3</experiments>
</comment>
<comment type="interaction">
    <interactant intactId="EBI-3921347">
        <id>P51687</id>
    </interactant>
    <interactant intactId="EBI-10258659">
        <id>Q86U28</id>
        <label>ISCA2</label>
    </interactant>
    <organismsDiffer>false</organismsDiffer>
    <experiments>3</experiments>
</comment>
<comment type="interaction">
    <interactant intactId="EBI-3921347">
        <id>P51687</id>
    </interactant>
    <interactant intactId="EBI-712105">
        <id>Q13352</id>
        <label>ITGB3BP</label>
    </interactant>
    <organismsDiffer>false</organismsDiffer>
    <experiments>3</experiments>
</comment>
<comment type="interaction">
    <interactant intactId="EBI-3921347">
        <id>P51687</id>
    </interactant>
    <interactant intactId="EBI-2805604">
        <id>Q2KHM9</id>
        <label>KIAA0753</label>
    </interactant>
    <organismsDiffer>false</organismsDiffer>
    <experiments>3</experiments>
</comment>
<comment type="interaction">
    <interactant intactId="EBI-3921347">
        <id>P51687</id>
    </interactant>
    <interactant intactId="EBI-12084444">
        <id>Q7Z3Y9</id>
        <label>KRT26</label>
    </interactant>
    <organismsDiffer>false</organismsDiffer>
    <experiments>3</experiments>
</comment>
<comment type="interaction">
    <interactant intactId="EBI-3921347">
        <id>P51687</id>
    </interactant>
    <interactant intactId="EBI-3044087">
        <id>Q7Z3Y8</id>
        <label>KRT27</label>
    </interactant>
    <organismsDiffer>false</organismsDiffer>
    <experiments>3</experiments>
</comment>
<comment type="interaction">
    <interactant intactId="EBI-3921347">
        <id>P51687</id>
    </interactant>
    <interactant intactId="EBI-1047093">
        <id>O76011</id>
        <label>KRT34</label>
    </interactant>
    <organismsDiffer>false</organismsDiffer>
    <experiments>3</experiments>
</comment>
<comment type="interaction">
    <interactant intactId="EBI-3921347">
        <id>P51687</id>
    </interactant>
    <interactant intactId="EBI-10171697">
        <id>Q6A162</id>
        <label>KRT40</label>
    </interactant>
    <organismsDiffer>false</organismsDiffer>
    <experiments>3</experiments>
</comment>
<comment type="interaction">
    <interactant intactId="EBI-3921347">
        <id>P51687</id>
    </interactant>
    <interactant intactId="EBI-2798728">
        <id>P61968</id>
        <label>LMO4</label>
    </interactant>
    <organismsDiffer>false</organismsDiffer>
    <experiments>3</experiments>
</comment>
<comment type="interaction">
    <interactant intactId="EBI-3921347">
        <id>P51687</id>
    </interactant>
    <interactant intactId="EBI-739552">
        <id>P43364</id>
        <label>MAGEA11</label>
    </interactant>
    <organismsDiffer>false</organismsDiffer>
    <experiments>3</experiments>
</comment>
<comment type="interaction">
    <interactant intactId="EBI-3921347">
        <id>P51687</id>
    </interactant>
    <interactant intactId="EBI-3957156">
        <id>Q96LZ2</id>
        <label>MAGEB10</label>
    </interactant>
    <organismsDiffer>false</organismsDiffer>
    <experiments>5</experiments>
</comment>
<comment type="interaction">
    <interactant intactId="EBI-3921347">
        <id>P51687</id>
    </interactant>
    <interactant intactId="EBI-12516603">
        <id>Q8WWY6</id>
        <label>MBD3L1</label>
    </interactant>
    <organismsDiffer>false</organismsDiffer>
    <experiments>3</experiments>
</comment>
<comment type="interaction">
    <interactant intactId="EBI-3921347">
        <id>P51687</id>
    </interactant>
    <interactant intactId="EBI-724076">
        <id>Q99750</id>
        <label>MDFI</label>
    </interactant>
    <organismsDiffer>false</organismsDiffer>
    <experiments>3</experiments>
</comment>
<comment type="interaction">
    <interactant intactId="EBI-3921347">
        <id>P51687</id>
    </interactant>
    <interactant intactId="EBI-514199">
        <id>Q9H204</id>
        <label>MED28</label>
    </interactant>
    <organismsDiffer>false</organismsDiffer>
    <experiments>3</experiments>
</comment>
<comment type="interaction">
    <interactant intactId="EBI-3921347">
        <id>P51687</id>
    </interactant>
    <interactant intactId="EBI-18582591">
        <id>Q99687-3</id>
        <label>MEIS3</label>
    </interactant>
    <organismsDiffer>false</organismsDiffer>
    <experiments>3</experiments>
</comment>
<comment type="interaction">
    <interactant intactId="EBI-3921347">
        <id>P51687</id>
    </interactant>
    <interactant intactId="EBI-9675802">
        <id>Q6PF18</id>
        <label>MORN3</label>
    </interactant>
    <organismsDiffer>false</organismsDiffer>
    <experiments>3</experiments>
</comment>
<comment type="interaction">
    <interactant intactId="EBI-3921347">
        <id>P51687</id>
    </interactant>
    <interactant intactId="EBI-10222416">
        <id>Q01449</id>
        <label>MYL7</label>
    </interactant>
    <organismsDiffer>false</organismsDiffer>
    <experiments>3</experiments>
</comment>
<comment type="interaction">
    <interactant intactId="EBI-3921347">
        <id>P51687</id>
    </interactant>
    <interactant intactId="EBI-351119">
        <id>O43795</id>
        <label>MYO1B</label>
    </interactant>
    <organismsDiffer>false</organismsDiffer>
    <experiments>3</experiments>
</comment>
<comment type="interaction">
    <interactant intactId="EBI-3921347">
        <id>P51687</id>
    </interactant>
    <interactant intactId="EBI-347978">
        <id>P37198</id>
        <label>NUP62</label>
    </interactant>
    <organismsDiffer>false</organismsDiffer>
    <experiments>6</experiments>
</comment>
<comment type="interaction">
    <interactant intactId="EBI-3921347">
        <id>P51687</id>
    </interactant>
    <interactant intactId="EBI-594747">
        <id>P40855</id>
        <label>PEX19</label>
    </interactant>
    <organismsDiffer>false</organismsDiffer>
    <experiments>3</experiments>
</comment>
<comment type="interaction">
    <interactant intactId="EBI-3921347">
        <id>P51687</id>
    </interactant>
    <interactant intactId="EBI-10232538">
        <id>Q8WWB5</id>
        <label>PIH1D2</label>
    </interactant>
    <organismsDiffer>false</organismsDiffer>
    <experiments>3</experiments>
</comment>
<comment type="interaction">
    <interactant intactId="EBI-3921347">
        <id>P51687</id>
    </interactant>
    <interactant intactId="EBI-12219503">
        <id>P01189</id>
        <label>POMC</label>
    </interactant>
    <organismsDiffer>false</organismsDiffer>
    <experiments>3</experiments>
</comment>
<comment type="interaction">
    <interactant intactId="EBI-3921347">
        <id>P51687</id>
    </interactant>
    <interactant intactId="EBI-12828023">
        <id>P54821</id>
        <label>PRRX1</label>
    </interactant>
    <organismsDiffer>false</organismsDiffer>
    <experiments>3</experiments>
</comment>
<comment type="interaction">
    <interactant intactId="EBI-3921347">
        <id>P51687</id>
    </interactant>
    <interactant intactId="EBI-17630019">
        <id>Q9NZH5-2</id>
        <label>PTTG2</label>
    </interactant>
    <organismsDiffer>false</organismsDiffer>
    <experiments>3</experiments>
</comment>
<comment type="interaction">
    <interactant intactId="EBI-3921347">
        <id>P51687</id>
    </interactant>
    <interactant intactId="EBI-948278">
        <id>Q15293</id>
        <label>RCN1</label>
    </interactant>
    <organismsDiffer>false</organismsDiffer>
    <experiments>3</experiments>
</comment>
<comment type="interaction">
    <interactant intactId="EBI-3921347">
        <id>P51687</id>
    </interactant>
    <interactant intactId="EBI-10829018">
        <id>Q04864-2</id>
        <label>REL</label>
    </interactant>
    <organismsDiffer>false</organismsDiffer>
    <experiments>3</experiments>
</comment>
<comment type="interaction">
    <interactant intactId="EBI-3921347">
        <id>P51687</id>
    </interactant>
    <interactant intactId="EBI-10489476">
        <id>Q96CP1</id>
        <label>RELA</label>
    </interactant>
    <organismsDiffer>false</organismsDiffer>
    <experiments>3</experiments>
</comment>
<comment type="interaction">
    <interactant intactId="EBI-3921347">
        <id>P51687</id>
    </interactant>
    <interactant intactId="EBI-1244971">
        <id>Q15669</id>
        <label>RHOH</label>
    </interactant>
    <organismsDiffer>false</organismsDiffer>
    <experiments>3</experiments>
</comment>
<comment type="interaction">
    <interactant intactId="EBI-3921347">
        <id>P51687</id>
    </interactant>
    <interactant intactId="EBI-11353503">
        <id>A6NDU8</id>
        <label>RIMOC1</label>
    </interactant>
    <organismsDiffer>false</organismsDiffer>
    <experiments>3</experiments>
</comment>
<comment type="interaction">
    <interactant intactId="EBI-3921347">
        <id>P51687</id>
    </interactant>
    <interactant intactId="EBI-726876">
        <id>Q6NUQ1</id>
        <label>RINT1</label>
    </interactant>
    <organismsDiffer>false</organismsDiffer>
    <experiments>3</experiments>
</comment>
<comment type="interaction">
    <interactant intactId="EBI-3921347">
        <id>P51687</id>
    </interactant>
    <interactant intactId="EBI-354582">
        <id>P05386</id>
        <label>RPLP1</label>
    </interactant>
    <organismsDiffer>false</organismsDiffer>
    <experiments>3</experiments>
</comment>
<comment type="interaction">
    <interactant intactId="EBI-3921347">
        <id>P51687</id>
    </interactant>
    <interactant intactId="EBI-1054572">
        <id>Q96LW2</id>
        <label>RSKR</label>
    </interactant>
    <organismsDiffer>false</organismsDiffer>
    <experiments>3</experiments>
</comment>
<comment type="interaction">
    <interactant intactId="EBI-3921347">
        <id>P51687</id>
    </interactant>
    <interactant intactId="EBI-6257312">
        <id>Q9BVN2</id>
        <label>RUSC1</label>
    </interactant>
    <organismsDiffer>false</organismsDiffer>
    <experiments>3</experiments>
</comment>
<comment type="interaction">
    <interactant intactId="EBI-3921347">
        <id>P51687</id>
    </interactant>
    <interactant intactId="EBI-748621">
        <id>Q9UJW9</id>
        <label>SERTAD3</label>
    </interactant>
    <organismsDiffer>false</organismsDiffer>
    <experiments>5</experiments>
</comment>
<comment type="interaction">
    <interactant intactId="EBI-3921347">
        <id>P51687</id>
    </interactant>
    <interactant intactId="EBI-347996">
        <id>O43765</id>
        <label>SGTA</label>
    </interactant>
    <organismsDiffer>false</organismsDiffer>
    <experiments>3</experiments>
</comment>
<comment type="interaction">
    <interactant intactId="EBI-3921347">
        <id>P51687</id>
    </interactant>
    <interactant intactId="EBI-747389">
        <id>Q7L8J4</id>
        <label>SH3BP5L</label>
    </interactant>
    <organismsDiffer>false</organismsDiffer>
    <experiments>3</experiments>
</comment>
<comment type="interaction">
    <interactant intactId="EBI-3921347">
        <id>P51687</id>
    </interactant>
    <interactant intactId="EBI-747719">
        <id>Q96H20</id>
        <label>SNF8</label>
    </interactant>
    <organismsDiffer>false</organismsDiffer>
    <experiments>5</experiments>
</comment>
<comment type="interaction">
    <interactant intactId="EBI-3921347">
        <id>P51687</id>
    </interactant>
    <interactant intactId="EBI-12288855">
        <id>Q5JUK2</id>
        <label>SOHLH1</label>
    </interactant>
    <organismsDiffer>false</organismsDiffer>
    <experiments>3</experiments>
</comment>
<comment type="interaction">
    <interactant intactId="EBI-3921347">
        <id>P51687</id>
    </interactant>
    <interactant intactId="EBI-999900">
        <id>Q8NBT2</id>
        <label>SPC24</label>
    </interactant>
    <organismsDiffer>false</organismsDiffer>
    <experiments>3</experiments>
</comment>
<comment type="interaction">
    <interactant intactId="EBI-3921347">
        <id>P51687</id>
    </interactant>
    <interactant intactId="EBI-1186119">
        <id>P51692</id>
        <label>STAT5B</label>
    </interactant>
    <organismsDiffer>false</organismsDiffer>
    <experiments>3</experiments>
</comment>
<comment type="interaction">
    <interactant intactId="EBI-3921347">
        <id>P51687</id>
    </interactant>
    <interactant intactId="EBI-12843506">
        <id>Q8IWL8</id>
        <label>STH</label>
    </interactant>
    <organismsDiffer>false</organismsDiffer>
    <experiments>3</experiments>
</comment>
<comment type="interaction">
    <interactant intactId="EBI-3921347">
        <id>P51687</id>
    </interactant>
    <interactant intactId="EBI-746930">
        <id>Q9H668</id>
        <label>STN1</label>
    </interactant>
    <organismsDiffer>false</organismsDiffer>
    <experiments>3</experiments>
</comment>
<comment type="interaction">
    <interactant intactId="EBI-3921347">
        <id>P51687</id>
    </interactant>
    <interactant intactId="EBI-2682386">
        <id>Q96PV0</id>
        <label>SYNGAP1</label>
    </interactant>
    <organismsDiffer>false</organismsDiffer>
    <experiments>3</experiments>
</comment>
<comment type="interaction">
    <interactant intactId="EBI-3921347">
        <id>P51687</id>
    </interactant>
    <interactant intactId="EBI-12090309">
        <id>Q9BXU0</id>
        <label>TEX12</label>
    </interactant>
    <organismsDiffer>false</organismsDiffer>
    <experiments>3</experiments>
</comment>
<comment type="interaction">
    <interactant intactId="EBI-3921347">
        <id>P51687</id>
    </interactant>
    <interactant intactId="EBI-492476">
        <id>Q96RU7</id>
        <label>TRIB3</label>
    </interactant>
    <organismsDiffer>false</organismsDiffer>
    <experiments>3</experiments>
</comment>
<comment type="interaction">
    <interactant intactId="EBI-3921347">
        <id>P51687</id>
    </interactant>
    <interactant intactId="EBI-10259086">
        <id>Q86UV6-2</id>
        <label>TRIM74</label>
    </interactant>
    <organismsDiffer>false</organismsDiffer>
    <experiments>3</experiments>
</comment>
<comment type="interaction">
    <interactant intactId="EBI-3921347">
        <id>P51687</id>
    </interactant>
    <interactant intactId="EBI-12806590">
        <id>Q86WV8</id>
        <label>TSC1</label>
    </interactant>
    <organismsDiffer>false</organismsDiffer>
    <experiments>3</experiments>
</comment>
<comment type="interaction">
    <interactant intactId="EBI-3921347">
        <id>P51687</id>
    </interactant>
    <interactant intactId="EBI-947187">
        <id>Q9UHD9</id>
        <label>UBQLN2</label>
    </interactant>
    <organismsDiffer>false</organismsDiffer>
    <experiments>3</experiments>
</comment>
<comment type="interaction">
    <interactant intactId="EBI-3921347">
        <id>P51687</id>
    </interactant>
    <interactant intactId="EBI-17923957">
        <id>Q8IWV8-2</id>
        <label>UBR2</label>
    </interactant>
    <organismsDiffer>false</organismsDiffer>
    <experiments>3</experiments>
</comment>
<comment type="interaction">
    <interactant intactId="EBI-3921347">
        <id>P51687</id>
    </interactant>
    <interactant intactId="EBI-357430">
        <id>P61758</id>
        <label>VBP1</label>
    </interactant>
    <organismsDiffer>false</organismsDiffer>
    <experiments>3</experiments>
</comment>
<comment type="interaction">
    <interactant intactId="EBI-3921347">
        <id>P51687</id>
    </interactant>
    <interactant intactId="EBI-12146727">
        <id>Q9UK41-2</id>
        <label>VPS28</label>
    </interactant>
    <organismsDiffer>false</organismsDiffer>
    <experiments>3</experiments>
</comment>
<comment type="interaction">
    <interactant intactId="EBI-3921347">
        <id>P51687</id>
    </interactant>
    <interactant intactId="EBI-11419867">
        <id>Q8TF47</id>
        <label>ZFP90</label>
    </interactant>
    <organismsDiffer>false</organismsDiffer>
    <experiments>3</experiments>
</comment>
<comment type="interaction">
    <interactant intactId="EBI-3921347">
        <id>P51687</id>
    </interactant>
    <interactant intactId="EBI-2849334">
        <id>P52747</id>
        <label>ZNF143</label>
    </interactant>
    <organismsDiffer>false</organismsDiffer>
    <experiments>3</experiments>
</comment>
<comment type="interaction">
    <interactant intactId="EBI-3921347">
        <id>P51687</id>
    </interactant>
    <interactant intactId="EBI-18096911">
        <id>Q8N1W2</id>
        <label>ZNF710</label>
    </interactant>
    <organismsDiffer>false</organismsDiffer>
    <experiments>3</experiments>
</comment>
<comment type="interaction">
    <interactant intactId="EBI-3921347">
        <id>P51687</id>
    </interactant>
    <interactant intactId="EBI-1538838">
        <id>Q2QGD7</id>
        <label>ZXDC</label>
    </interactant>
    <organismsDiffer>false</organismsDiffer>
    <experiments>3</experiments>
</comment>
<comment type="interaction">
    <interactant intactId="EBI-3921347">
        <id>P51687</id>
    </interactant>
    <interactant intactId="EBI-10255097">
        <id>Q6ZN96</id>
    </interactant>
    <organismsDiffer>false</organismsDiffer>
    <experiments>3</experiments>
</comment>
<comment type="subcellular location">
    <subcellularLocation>
        <location evidence="2">Mitochondrion intermembrane space</location>
    </subcellularLocation>
</comment>
<comment type="disease" evidence="4 5 6 8 9">
    <disease id="DI-01843">
        <name>Sulfite oxidase deficiency, isolated</name>
        <acronym>ISOD</acronym>
        <description>A life-threatening, autosomal recessive neurometabolic disorder characterized by severe neurological impairment. Classic ISOD manifests in the first few hours to days of life and is characterized by intractable seizures, feeding difficulties, rapidly progressive encephalopathy, microcephaly, and profound intellectual disability. Children usually die during the first few months of life. Mild ISOD manifests in infancy or early childhood and is characterized by ectopia lentis that is variably present, developmental delay and regression, movement disorder characterized by dystonia and choreoathetosis, ataxia, and rarely acute hemiplegia due to metabolic stroke.</description>
        <dbReference type="MIM" id="272300"/>
    </disease>
    <text>The disease is caused by variants affecting the gene represented in this entry.</text>
</comment>
<comment type="sequence caution" evidence="11">
    <conflict type="erroneous initiation">
        <sequence resource="EMBL-CDS" id="AAA74886"/>
    </conflict>
    <text>Truncated N-terminus.</text>
</comment>
<comment type="sequence caution" evidence="11">
    <conflict type="erroneous initiation">
        <sequence resource="EMBL-CDS" id="AAL08048"/>
    </conflict>
    <text>Truncated N-terminus.</text>
</comment>
<reference key="1">
    <citation type="journal article" date="1995" name="Biochim. Biophys. Acta">
        <title>Molecular cloning of human liver sulfite oxidase.</title>
        <authorList>
            <person name="Garrett R.M."/>
            <person name="Bellissimo D.B."/>
            <person name="Rajagopalan K.V."/>
        </authorList>
    </citation>
    <scope>NUCLEOTIDE SEQUENCE [MRNA]</scope>
    <source>
        <tissue>Liver</tissue>
    </source>
</reference>
<reference key="2">
    <citation type="journal article" date="2004" name="Genome Res.">
        <title>The status, quality, and expansion of the NIH full-length cDNA project: the Mammalian Gene Collection (MGC).</title>
        <authorList>
            <consortium name="The MGC Project Team"/>
        </authorList>
    </citation>
    <scope>NUCLEOTIDE SEQUENCE [LARGE SCALE MRNA]</scope>
    <source>
        <tissue>Pancreas</tissue>
    </source>
</reference>
<reference key="3">
    <citation type="submission" date="2001-09" db="EMBL/GenBank/DDBJ databases">
        <title>Genomic DNA sequence of human sulfite oxidase SUOX.</title>
        <authorList>
            <person name="Coyne K.E."/>
            <person name="Johnson J.L."/>
            <person name="Rajagopalan K.V."/>
        </authorList>
    </citation>
    <scope>NUCLEOTIDE SEQUENCE [GENOMIC DNA] OF 18-545</scope>
</reference>
<reference key="4">
    <citation type="journal article" date="2014" name="J. Proteomics">
        <title>An enzyme assisted RP-RPLC approach for in-depth analysis of human liver phosphoproteome.</title>
        <authorList>
            <person name="Bian Y."/>
            <person name="Song C."/>
            <person name="Cheng K."/>
            <person name="Dong M."/>
            <person name="Wang F."/>
            <person name="Huang J."/>
            <person name="Sun D."/>
            <person name="Wang L."/>
            <person name="Ye M."/>
            <person name="Zou H."/>
        </authorList>
    </citation>
    <scope>PHOSPHORYLATION [LARGE SCALE ANALYSIS] AT SER-123</scope>
    <scope>IDENTIFICATION BY MASS SPECTROMETRY [LARGE SCALE ANALYSIS]</scope>
    <source>
        <tissue>Liver</tissue>
    </source>
</reference>
<reference key="5">
    <citation type="journal article" date="2003" name="Acta Crystallogr. D">
        <title>The 1.2 A structure of the human sulfite oxidase cytochrome b(5) domain.</title>
        <authorList>
            <person name="Rudolph M.J."/>
            <person name="Johnson J.L."/>
            <person name="Rajagopalan K.V."/>
            <person name="Kisker C."/>
        </authorList>
    </citation>
    <scope>X-RAY CRYSTALLOGRAPHY (1.2 ANGSTROMS) OF 79-160 IN COMPLEX WITH HEME</scope>
    <scope>COFACTOR</scope>
    <scope>SUBUNIT</scope>
</reference>
<reference key="6">
    <citation type="journal article" date="1997" name="Cell">
        <title>Molecular basis of sulfite oxidase deficiency from the structure of sulfite oxidase.</title>
        <authorList>
            <person name="Kisker C."/>
            <person name="Schindelin H."/>
            <person name="Pacheco A."/>
            <person name="Wehbi W.A."/>
            <person name="Garrett R.M."/>
            <person name="Rajagopalan K.V."/>
            <person name="Enemark J.H."/>
            <person name="Rees D.C."/>
        </authorList>
    </citation>
    <scope>VARIANTS ISOD GLN-217; ASP-265; TYR-427 AND ASP-530</scope>
</reference>
<reference key="7">
    <citation type="journal article" date="1998" name="Proc. Natl. Acad. Sci. U.S.A.">
        <title>Human sulfite oxidase R160Q: identification of the mutation in a sulfite oxidase-deficient patient and expression and characterization of the mutant enzyme.</title>
        <authorList>
            <person name="Garrett R.M."/>
            <person name="Johnson J.L."/>
            <person name="Graf T.N."/>
            <person name="Feigenbaum A."/>
            <person name="Rajagopalan K.V."/>
        </authorList>
    </citation>
    <scope>VARIANT ISOD GLN-217</scope>
</reference>
<reference key="8">
    <citation type="journal article" date="1999" name="Ophthalmology">
        <title>Isolated sulfite oxidase deficiency: review of two cases in one family.</title>
        <authorList>
            <person name="Edwards M.C."/>
            <person name="Johnson J.L."/>
            <person name="Marriage B."/>
            <person name="Graf T.N."/>
            <person name="Coyne K.E."/>
            <person name="Rajagopalan K.V."/>
            <person name="MacDonald I.M."/>
        </authorList>
    </citation>
    <scope>VARIANTS ISOD ASP-265 AND TYR-427</scope>
</reference>
<reference key="9">
    <citation type="journal article" date="2002" name="Hum. Mutat.">
        <title>Isolated sulfite oxidase deficiency: identification of 12 novel SUOX mutations in 10 patients.</title>
        <authorList>
            <person name="Johnson J.L."/>
            <person name="Coyne K.E."/>
            <person name="Garrett R.M."/>
            <person name="Zabot M.-T."/>
            <person name="Dorche C."/>
            <person name="Kisker C."/>
            <person name="Rajagopalan K.V."/>
        </authorList>
    </citation>
    <scope>VARIANTS ISOD LEU-258; GLN-268; SER-362; HIS-366; ARG-379; ARG-396 AND ARG-450</scope>
</reference>
<reference key="10">
    <citation type="journal article" date="2002" name="Neuropediatrics">
        <title>A novel mutation in neonatal isolated sulphite oxidase deficiency.</title>
        <authorList>
            <person name="Lee H.F."/>
            <person name="Mak B.S."/>
            <person name="Chi C.S."/>
            <person name="Tsai C.R."/>
            <person name="Chen C.H."/>
            <person name="Shu S.G."/>
        </authorList>
    </citation>
    <scope>VARIANT ISOD GLN-217</scope>
</reference>
<organism>
    <name type="scientific">Homo sapiens</name>
    <name type="common">Human</name>
    <dbReference type="NCBI Taxonomy" id="9606"/>
    <lineage>
        <taxon>Eukaryota</taxon>
        <taxon>Metazoa</taxon>
        <taxon>Chordata</taxon>
        <taxon>Craniata</taxon>
        <taxon>Vertebrata</taxon>
        <taxon>Euteleostomi</taxon>
        <taxon>Mammalia</taxon>
        <taxon>Eutheria</taxon>
        <taxon>Euarchontoglires</taxon>
        <taxon>Primates</taxon>
        <taxon>Haplorrhini</taxon>
        <taxon>Catarrhini</taxon>
        <taxon>Hominidae</taxon>
        <taxon>Homo</taxon>
    </lineage>
</organism>
<proteinExistence type="evidence at protein level"/>
<name>SUOX_HUMAN</name>
<gene>
    <name type="primary">SUOX</name>
</gene>
<protein>
    <recommendedName>
        <fullName evidence="10">Sulfite oxidase, mitochondrial</fullName>
        <ecNumber evidence="2">1.8.3.1</ecNumber>
    </recommendedName>
</protein>
<sequence>MLLLHRAVVLRLQQACRLKSIPSRICIQACSTNDSFQPQRPSLTFSGDNSSTQGWRVMGTLLGLGAVLAYQDHRCRAAQESTHIYTKEEVSSHTSPETGIWVTLGSEVFDVTEFVDLHPGGPSKLMLAAGGPLEPFWALYAVHNQSHVRELLAQYKIGELNPEDKVAPTVETSDPYADDPVRHPALKVNSQRPFNAEPPPELLTENYITPNPIFFTRNHLPVPNLDPDTYRLHVVGAPGGQSLSLSLDDLHNFPRYEITVTLQCAGNRRSEMTQVKEVKGLEWRTGAISTARWAGARLCDVLAQAGHQLCETEAHVCFEGLDSDPTGTAYGASIPLARAMDPEAEVLLAYEMNGQPLPRDHGFPVRVVVPGVVGARHVKWLGRVSVQPEESYSHWQRRDYKGFSPSVDWETVDFDSAPSIQELPVQSAITEPRDGETVESGEVTIKGYAWSGGGRAVIRVDVSLDGGLTWQVAKLDGEEQRPRKAWAWRLWQLKAPVPAGQKELNIVCKAVDDGYNVQPDTVAPIWNLRGVLSNAWHRVHVYVSP</sequence>
<feature type="transit peptide" description="Mitochondrion" evidence="2">
    <location>
        <begin position="1"/>
        <end position="79"/>
    </location>
</feature>
<feature type="chain" id="PRO_0000006481" description="Sulfite oxidase, mitochondrial">
    <location>
        <begin position="80"/>
        <end position="545"/>
    </location>
</feature>
<feature type="domain" description="Cytochrome b5 heme-binding" evidence="3">
    <location>
        <begin position="82"/>
        <end position="161"/>
    </location>
</feature>
<feature type="region of interest" description="Hinge" evidence="1">
    <location>
        <begin position="165"/>
        <end position="174"/>
    </location>
</feature>
<feature type="region of interest" description="Moco domain" evidence="1">
    <location>
        <begin position="175"/>
        <end position="401"/>
    </location>
</feature>
<feature type="region of interest" description="Homodimerization" evidence="1">
    <location>
        <begin position="402"/>
        <end position="538"/>
    </location>
</feature>
<feature type="binding site" description="axial binding residue" evidence="7">
    <location>
        <position position="118"/>
    </location>
    <ligand>
        <name>heme b</name>
        <dbReference type="ChEBI" id="CHEBI:60344"/>
    </ligand>
    <ligandPart>
        <name>Fe</name>
        <dbReference type="ChEBI" id="CHEBI:18248"/>
    </ligandPart>
</feature>
<feature type="binding site" description="axial binding residue" evidence="7">
    <location>
        <position position="143"/>
    </location>
    <ligand>
        <name>heme b</name>
        <dbReference type="ChEBI" id="CHEBI:60344"/>
    </ligand>
    <ligandPart>
        <name>Fe</name>
        <dbReference type="ChEBI" id="CHEBI:18248"/>
    </ligandPart>
</feature>
<feature type="binding site" evidence="7">
    <location>
        <position position="145"/>
    </location>
    <ligand>
        <name>heme b</name>
        <dbReference type="ChEBI" id="CHEBI:60344"/>
    </ligand>
</feature>
<feature type="binding site" evidence="7">
    <location>
        <position position="147"/>
    </location>
    <ligand>
        <name>heme b</name>
        <dbReference type="ChEBI" id="CHEBI:60344"/>
    </ligand>
</feature>
<feature type="binding site" evidence="1">
    <location>
        <begin position="215"/>
        <end position="219"/>
    </location>
    <ligand>
        <name>Mo-molybdopterin</name>
        <dbReference type="ChEBI" id="CHEBI:71302"/>
    </ligand>
</feature>
<feature type="binding site" evidence="1">
    <location>
        <position position="264"/>
    </location>
    <ligand>
        <name>Mo-molybdopterin</name>
        <dbReference type="ChEBI" id="CHEBI:71302"/>
    </ligand>
    <ligandPart>
        <name>Mo</name>
        <dbReference type="ChEBI" id="CHEBI:28685"/>
    </ligandPart>
</feature>
<feature type="binding site" evidence="1">
    <location>
        <position position="322"/>
    </location>
    <ligand>
        <name>Mo-molybdopterin</name>
        <dbReference type="ChEBI" id="CHEBI:71302"/>
    </ligand>
</feature>
<feature type="binding site" evidence="1">
    <location>
        <position position="361"/>
    </location>
    <ligand>
        <name>Mo-molybdopterin</name>
        <dbReference type="ChEBI" id="CHEBI:71302"/>
    </ligand>
</feature>
<feature type="binding site" evidence="1">
    <location>
        <position position="366"/>
    </location>
    <ligand>
        <name>Mo-molybdopterin</name>
        <dbReference type="ChEBI" id="CHEBI:71302"/>
    </ligand>
</feature>
<feature type="binding site" evidence="1">
    <location>
        <begin position="377"/>
        <end position="379"/>
    </location>
    <ligand>
        <name>Mo-molybdopterin</name>
        <dbReference type="ChEBI" id="CHEBI:71302"/>
    </ligand>
</feature>
<feature type="modified residue" description="Phosphoserine" evidence="12">
    <location>
        <position position="123"/>
    </location>
</feature>
<feature type="sequence variant" id="VAR_002200" description="In ISOD; 2% of activity; dbSNP:rs121908007." evidence="6 8 9">
    <original>R</original>
    <variation>Q</variation>
    <location>
        <position position="217"/>
    </location>
</feature>
<feature type="sequence variant" id="VAR_015724" description="In ISOD." evidence="5">
    <original>I</original>
    <variation>L</variation>
    <location>
        <position position="258"/>
    </location>
</feature>
<feature type="sequence variant" id="VAR_002201" description="In ISOD; dbSNP:rs121908008." evidence="4 8">
    <original>A</original>
    <variation>D</variation>
    <location>
        <position position="265"/>
    </location>
</feature>
<feature type="sequence variant" id="VAR_015725" description="In ISOD; dbSNP:rs1041681662." evidence="5">
    <original>R</original>
    <variation>Q</variation>
    <location>
        <position position="268"/>
    </location>
</feature>
<feature type="sequence variant" id="VAR_015726" description="In ISOD; dbSNP:rs757559168." evidence="5">
    <original>G</original>
    <variation>S</variation>
    <location>
        <position position="362"/>
    </location>
</feature>
<feature type="sequence variant" id="VAR_015727" description="In ISOD; dbSNP:rs776690106." evidence="5">
    <original>R</original>
    <variation>H</variation>
    <location>
        <position position="366"/>
    </location>
</feature>
<feature type="sequence variant" id="VAR_015728" description="In ISOD; dbSNP:rs777114729." evidence="5">
    <original>K</original>
    <variation>R</variation>
    <location>
        <position position="379"/>
    </location>
</feature>
<feature type="sequence variant" id="VAR_015729" description="In ISOD." evidence="5">
    <original>Q</original>
    <variation>R</variation>
    <location>
        <position position="396"/>
    </location>
</feature>
<feature type="sequence variant" id="VAR_002202" description="In ISOD." evidence="4 8">
    <original>S</original>
    <variation>Y</variation>
    <location>
        <position position="427"/>
    </location>
</feature>
<feature type="sequence variant" id="VAR_015730" description="In ISOD." evidence="5">
    <original>W</original>
    <variation>R</variation>
    <location>
        <position position="450"/>
    </location>
</feature>
<feature type="sequence variant" id="VAR_002203" description="In ISOD; dbSNP:rs121908009." evidence="8">
    <original>G</original>
    <variation>D</variation>
    <location>
        <position position="530"/>
    </location>
</feature>
<feature type="turn" evidence="13">
    <location>
        <begin position="96"/>
        <end position="98"/>
    </location>
</feature>
<feature type="strand" evidence="13">
    <location>
        <begin position="99"/>
        <end position="104"/>
    </location>
</feature>
<feature type="strand" evidence="13">
    <location>
        <begin position="107"/>
        <end position="110"/>
    </location>
</feature>
<feature type="turn" evidence="13">
    <location>
        <begin position="112"/>
        <end position="114"/>
    </location>
</feature>
<feature type="helix" evidence="13">
    <location>
        <begin position="115"/>
        <end position="117"/>
    </location>
</feature>
<feature type="helix" evidence="13">
    <location>
        <begin position="122"/>
        <end position="126"/>
    </location>
</feature>
<feature type="turn" evidence="13">
    <location>
        <begin position="127"/>
        <end position="130"/>
    </location>
</feature>
<feature type="strand" evidence="13">
    <location>
        <begin position="131"/>
        <end position="133"/>
    </location>
</feature>
<feature type="helix" evidence="13">
    <location>
        <begin position="134"/>
        <end position="137"/>
    </location>
</feature>
<feature type="helix" evidence="13">
    <location>
        <begin position="141"/>
        <end position="143"/>
    </location>
</feature>
<feature type="helix" evidence="13">
    <location>
        <begin position="146"/>
        <end position="153"/>
    </location>
</feature>
<feature type="strand" evidence="13">
    <location>
        <begin position="156"/>
        <end position="159"/>
    </location>
</feature>
<accession>P51687</accession>